<evidence type="ECO:0000255" key="1">
    <source>
        <dbReference type="HAMAP-Rule" id="MF_00514"/>
    </source>
</evidence>
<evidence type="ECO:0000256" key="2">
    <source>
        <dbReference type="SAM" id="MobiDB-lite"/>
    </source>
</evidence>
<evidence type="ECO:0000305" key="3"/>
<comment type="similarity">
    <text evidence="1">Belongs to the bacterial ribosomal protein bL35 family.</text>
</comment>
<dbReference type="EMBL" id="CP000514">
    <property type="protein sequence ID" value="ABM19140.1"/>
    <property type="molecule type" value="Genomic_DNA"/>
</dbReference>
<dbReference type="RefSeq" id="WP_007151842.1">
    <property type="nucleotide sequence ID" value="NC_008740.1"/>
</dbReference>
<dbReference type="SMR" id="A1U2C1"/>
<dbReference type="STRING" id="351348.Maqu_2059"/>
<dbReference type="GeneID" id="94723187"/>
<dbReference type="KEGG" id="maq:Maqu_2059"/>
<dbReference type="eggNOG" id="COG0291">
    <property type="taxonomic scope" value="Bacteria"/>
</dbReference>
<dbReference type="HOGENOM" id="CLU_169643_1_1_6"/>
<dbReference type="OrthoDB" id="47476at2"/>
<dbReference type="Proteomes" id="UP000000998">
    <property type="component" value="Chromosome"/>
</dbReference>
<dbReference type="GO" id="GO:0022625">
    <property type="term" value="C:cytosolic large ribosomal subunit"/>
    <property type="evidence" value="ECO:0007669"/>
    <property type="project" value="TreeGrafter"/>
</dbReference>
<dbReference type="GO" id="GO:0003735">
    <property type="term" value="F:structural constituent of ribosome"/>
    <property type="evidence" value="ECO:0007669"/>
    <property type="project" value="InterPro"/>
</dbReference>
<dbReference type="GO" id="GO:0006412">
    <property type="term" value="P:translation"/>
    <property type="evidence" value="ECO:0007669"/>
    <property type="project" value="UniProtKB-UniRule"/>
</dbReference>
<dbReference type="FunFam" id="4.10.410.60:FF:000001">
    <property type="entry name" value="50S ribosomal protein L35"/>
    <property type="match status" value="1"/>
</dbReference>
<dbReference type="Gene3D" id="4.10.410.60">
    <property type="match status" value="1"/>
</dbReference>
<dbReference type="HAMAP" id="MF_00514">
    <property type="entry name" value="Ribosomal_bL35"/>
    <property type="match status" value="1"/>
</dbReference>
<dbReference type="InterPro" id="IPR001706">
    <property type="entry name" value="Ribosomal_bL35"/>
</dbReference>
<dbReference type="InterPro" id="IPR021137">
    <property type="entry name" value="Ribosomal_bL35-like"/>
</dbReference>
<dbReference type="InterPro" id="IPR018265">
    <property type="entry name" value="Ribosomal_bL35_CS"/>
</dbReference>
<dbReference type="InterPro" id="IPR037229">
    <property type="entry name" value="Ribosomal_bL35_sf"/>
</dbReference>
<dbReference type="NCBIfam" id="TIGR00001">
    <property type="entry name" value="rpmI_bact"/>
    <property type="match status" value="1"/>
</dbReference>
<dbReference type="PANTHER" id="PTHR33343">
    <property type="entry name" value="54S RIBOSOMAL PROTEIN BL35M"/>
    <property type="match status" value="1"/>
</dbReference>
<dbReference type="PANTHER" id="PTHR33343:SF1">
    <property type="entry name" value="LARGE RIBOSOMAL SUBUNIT PROTEIN BL35M"/>
    <property type="match status" value="1"/>
</dbReference>
<dbReference type="Pfam" id="PF01632">
    <property type="entry name" value="Ribosomal_L35p"/>
    <property type="match status" value="1"/>
</dbReference>
<dbReference type="PRINTS" id="PR00064">
    <property type="entry name" value="RIBOSOMALL35"/>
</dbReference>
<dbReference type="SUPFAM" id="SSF143034">
    <property type="entry name" value="L35p-like"/>
    <property type="match status" value="1"/>
</dbReference>
<dbReference type="PROSITE" id="PS00936">
    <property type="entry name" value="RIBOSOMAL_L35"/>
    <property type="match status" value="1"/>
</dbReference>
<sequence>MPKMKTKSGATKRFKKTATGFKHKQSFTSHILTKKSPKRKRQLRGTKLIAKSDVASIKRMTAC</sequence>
<proteinExistence type="inferred from homology"/>
<feature type="chain" id="PRO_1000050714" description="Large ribosomal subunit protein bL35">
    <location>
        <begin position="1"/>
        <end position="63"/>
    </location>
</feature>
<feature type="region of interest" description="Disordered" evidence="2">
    <location>
        <begin position="1"/>
        <end position="22"/>
    </location>
</feature>
<organism>
    <name type="scientific">Marinobacter nauticus (strain ATCC 700491 / DSM 11845 / VT8)</name>
    <name type="common">Marinobacter aquaeolei</name>
    <dbReference type="NCBI Taxonomy" id="351348"/>
    <lineage>
        <taxon>Bacteria</taxon>
        <taxon>Pseudomonadati</taxon>
        <taxon>Pseudomonadota</taxon>
        <taxon>Gammaproteobacteria</taxon>
        <taxon>Pseudomonadales</taxon>
        <taxon>Marinobacteraceae</taxon>
        <taxon>Marinobacter</taxon>
    </lineage>
</organism>
<gene>
    <name evidence="1" type="primary">rpmI</name>
    <name type="ordered locus">Maqu_2059</name>
</gene>
<protein>
    <recommendedName>
        <fullName evidence="1">Large ribosomal subunit protein bL35</fullName>
    </recommendedName>
    <alternativeName>
        <fullName evidence="3">50S ribosomal protein L35</fullName>
    </alternativeName>
</protein>
<name>RL35_MARN8</name>
<accession>A1U2C1</accession>
<reference key="1">
    <citation type="journal article" date="2011" name="Appl. Environ. Microbiol.">
        <title>Genomic potential of Marinobacter aquaeolei, a biogeochemical 'opportunitroph'.</title>
        <authorList>
            <person name="Singer E."/>
            <person name="Webb E.A."/>
            <person name="Nelson W.C."/>
            <person name="Heidelberg J.F."/>
            <person name="Ivanova N."/>
            <person name="Pati A."/>
            <person name="Edwards K.J."/>
        </authorList>
    </citation>
    <scope>NUCLEOTIDE SEQUENCE [LARGE SCALE GENOMIC DNA]</scope>
    <source>
        <strain>ATCC 700491 / DSM 11845 / VT8</strain>
    </source>
</reference>
<keyword id="KW-0687">Ribonucleoprotein</keyword>
<keyword id="KW-0689">Ribosomal protein</keyword>